<protein>
    <recommendedName>
        <fullName evidence="1">Large ribosomal subunit protein uL18</fullName>
    </recommendedName>
    <alternativeName>
        <fullName evidence="3">50S ribosomal protein L18</fullName>
    </alternativeName>
</protein>
<dbReference type="EMBL" id="CR931997">
    <property type="protein sequence ID" value="CAI37972.1"/>
    <property type="molecule type" value="Genomic_DNA"/>
</dbReference>
<dbReference type="RefSeq" id="WP_011274135.1">
    <property type="nucleotide sequence ID" value="NC_007164.1"/>
</dbReference>
<dbReference type="SMR" id="Q4JT85"/>
<dbReference type="STRING" id="306537.jk1795"/>
<dbReference type="KEGG" id="cjk:jk1795"/>
<dbReference type="PATRIC" id="fig|306537.10.peg.1820"/>
<dbReference type="eggNOG" id="COG0256">
    <property type="taxonomic scope" value="Bacteria"/>
</dbReference>
<dbReference type="HOGENOM" id="CLU_098841_0_1_11"/>
<dbReference type="OrthoDB" id="9810939at2"/>
<dbReference type="Proteomes" id="UP000000545">
    <property type="component" value="Chromosome"/>
</dbReference>
<dbReference type="GO" id="GO:0022625">
    <property type="term" value="C:cytosolic large ribosomal subunit"/>
    <property type="evidence" value="ECO:0007669"/>
    <property type="project" value="TreeGrafter"/>
</dbReference>
<dbReference type="GO" id="GO:0008097">
    <property type="term" value="F:5S rRNA binding"/>
    <property type="evidence" value="ECO:0007669"/>
    <property type="project" value="TreeGrafter"/>
</dbReference>
<dbReference type="GO" id="GO:0003735">
    <property type="term" value="F:structural constituent of ribosome"/>
    <property type="evidence" value="ECO:0007669"/>
    <property type="project" value="InterPro"/>
</dbReference>
<dbReference type="GO" id="GO:0006412">
    <property type="term" value="P:translation"/>
    <property type="evidence" value="ECO:0007669"/>
    <property type="project" value="UniProtKB-UniRule"/>
</dbReference>
<dbReference type="CDD" id="cd00432">
    <property type="entry name" value="Ribosomal_L18_L5e"/>
    <property type="match status" value="1"/>
</dbReference>
<dbReference type="FunFam" id="3.30.420.100:FF:000001">
    <property type="entry name" value="50S ribosomal protein L18"/>
    <property type="match status" value="1"/>
</dbReference>
<dbReference type="Gene3D" id="3.30.420.100">
    <property type="match status" value="1"/>
</dbReference>
<dbReference type="HAMAP" id="MF_01337_B">
    <property type="entry name" value="Ribosomal_uL18_B"/>
    <property type="match status" value="1"/>
</dbReference>
<dbReference type="InterPro" id="IPR004389">
    <property type="entry name" value="Ribosomal_uL18_bac-type"/>
</dbReference>
<dbReference type="InterPro" id="IPR005484">
    <property type="entry name" value="Ribosomal_uL18_bac/euk"/>
</dbReference>
<dbReference type="NCBIfam" id="TIGR00060">
    <property type="entry name" value="L18_bact"/>
    <property type="match status" value="1"/>
</dbReference>
<dbReference type="PANTHER" id="PTHR12899">
    <property type="entry name" value="39S RIBOSOMAL PROTEIN L18, MITOCHONDRIAL"/>
    <property type="match status" value="1"/>
</dbReference>
<dbReference type="PANTHER" id="PTHR12899:SF3">
    <property type="entry name" value="LARGE RIBOSOMAL SUBUNIT PROTEIN UL18M"/>
    <property type="match status" value="1"/>
</dbReference>
<dbReference type="Pfam" id="PF00861">
    <property type="entry name" value="Ribosomal_L18p"/>
    <property type="match status" value="1"/>
</dbReference>
<dbReference type="SUPFAM" id="SSF53137">
    <property type="entry name" value="Translational machinery components"/>
    <property type="match status" value="1"/>
</dbReference>
<evidence type="ECO:0000255" key="1">
    <source>
        <dbReference type="HAMAP-Rule" id="MF_01337"/>
    </source>
</evidence>
<evidence type="ECO:0000256" key="2">
    <source>
        <dbReference type="SAM" id="MobiDB-lite"/>
    </source>
</evidence>
<evidence type="ECO:0000305" key="3"/>
<proteinExistence type="inferred from homology"/>
<keyword id="KW-1185">Reference proteome</keyword>
<keyword id="KW-0687">Ribonucleoprotein</keyword>
<keyword id="KW-0689">Ribosomal protein</keyword>
<keyword id="KW-0694">RNA-binding</keyword>
<keyword id="KW-0699">rRNA-binding</keyword>
<organism>
    <name type="scientific">Corynebacterium jeikeium (strain K411)</name>
    <dbReference type="NCBI Taxonomy" id="306537"/>
    <lineage>
        <taxon>Bacteria</taxon>
        <taxon>Bacillati</taxon>
        <taxon>Actinomycetota</taxon>
        <taxon>Actinomycetes</taxon>
        <taxon>Mycobacteriales</taxon>
        <taxon>Corynebacteriaceae</taxon>
        <taxon>Corynebacterium</taxon>
    </lineage>
</organism>
<comment type="function">
    <text evidence="1">This is one of the proteins that bind and probably mediate the attachment of the 5S RNA into the large ribosomal subunit, where it forms part of the central protuberance.</text>
</comment>
<comment type="subunit">
    <text evidence="1">Part of the 50S ribosomal subunit; part of the 5S rRNA/L5/L18/L25 subcomplex. Contacts the 5S and 23S rRNAs.</text>
</comment>
<comment type="similarity">
    <text evidence="1">Belongs to the universal ribosomal protein uL18 family.</text>
</comment>
<reference key="1">
    <citation type="journal article" date="2005" name="J. Bacteriol.">
        <title>Complete genome sequence and analysis of the multiresistant nosocomial pathogen Corynebacterium jeikeium K411, a lipid-requiring bacterium of the human skin flora.</title>
        <authorList>
            <person name="Tauch A."/>
            <person name="Kaiser O."/>
            <person name="Hain T."/>
            <person name="Goesmann A."/>
            <person name="Weisshaar B."/>
            <person name="Albersmeier A."/>
            <person name="Bekel T."/>
            <person name="Bischoff N."/>
            <person name="Brune I."/>
            <person name="Chakraborty T."/>
            <person name="Kalinowski J."/>
            <person name="Meyer F."/>
            <person name="Rupp O."/>
            <person name="Schneiker S."/>
            <person name="Viehoever P."/>
            <person name="Puehler A."/>
        </authorList>
    </citation>
    <scope>NUCLEOTIDE SEQUENCE [LARGE SCALE GENOMIC DNA]</scope>
    <source>
        <strain>K411</strain>
    </source>
</reference>
<name>RL18_CORJK</name>
<accession>Q4JT85</accession>
<sequence length="134" mass="14711">MSNTAQNEKRLPVGKDISTRRRTARARRHFRIRKTLSGTPETPRLVIHRTSRHMHAQVIDDVAGHTLVAASTMEADVRAMEGDKKARGAKVGQLIAERAKAAGIEAVVFDRAGYKYHGRVAALADAAREGGLKF</sequence>
<feature type="chain" id="PRO_0000251303" description="Large ribosomal subunit protein uL18">
    <location>
        <begin position="1"/>
        <end position="134"/>
    </location>
</feature>
<feature type="region of interest" description="Disordered" evidence="2">
    <location>
        <begin position="1"/>
        <end position="25"/>
    </location>
</feature>
<feature type="compositionally biased region" description="Basic and acidic residues" evidence="2">
    <location>
        <begin position="7"/>
        <end position="19"/>
    </location>
</feature>
<gene>
    <name evidence="1" type="primary">rplR</name>
    <name type="ordered locus">jk1795</name>
</gene>